<sequence>MEKGQMLYEGKAKKVYTTDQEGIYWVEYKDDATAFNGEKKGTIGDKGIVNNRLSALLFEVLEKTGIPTHFIELLNDREMLVRKLEMIPLEVVVRNIAAGSLAKRLGVAEGLKLSRPVVELYYKDDALGDPFVNESHSLAMGWAEERDLKEIQELGLKINGELQKILDQAGIILVDFKLEFGKAEGKVYLGDEISPDTCRFWDKETQEKLDKDRFRRDLGKVEEAYAEVYRRVKEVLKD</sequence>
<gene>
    <name evidence="1" type="primary">purC</name>
    <name type="ordered locus">DSY3931</name>
</gene>
<keyword id="KW-0067">ATP-binding</keyword>
<keyword id="KW-0436">Ligase</keyword>
<keyword id="KW-0547">Nucleotide-binding</keyword>
<keyword id="KW-0658">Purine biosynthesis</keyword>
<keyword id="KW-1185">Reference proteome</keyword>
<proteinExistence type="inferred from homology"/>
<feature type="chain" id="PRO_1000018698" description="Phosphoribosylaminoimidazole-succinocarboxamide synthase">
    <location>
        <begin position="1"/>
        <end position="238"/>
    </location>
</feature>
<dbReference type="EC" id="6.3.2.6" evidence="1"/>
<dbReference type="EMBL" id="AP008230">
    <property type="protein sequence ID" value="BAE85720.1"/>
    <property type="molecule type" value="Genomic_DNA"/>
</dbReference>
<dbReference type="RefSeq" id="WP_005817239.1">
    <property type="nucleotide sequence ID" value="NC_007907.1"/>
</dbReference>
<dbReference type="SMR" id="Q24QH2"/>
<dbReference type="STRING" id="138119.DSY3931"/>
<dbReference type="KEGG" id="dsy:DSY3931"/>
<dbReference type="eggNOG" id="COG0152">
    <property type="taxonomic scope" value="Bacteria"/>
</dbReference>
<dbReference type="HOGENOM" id="CLU_061495_2_0_9"/>
<dbReference type="UniPathway" id="UPA00074">
    <property type="reaction ID" value="UER00131"/>
</dbReference>
<dbReference type="Proteomes" id="UP000001946">
    <property type="component" value="Chromosome"/>
</dbReference>
<dbReference type="GO" id="GO:0005524">
    <property type="term" value="F:ATP binding"/>
    <property type="evidence" value="ECO:0007669"/>
    <property type="project" value="UniProtKB-KW"/>
</dbReference>
<dbReference type="GO" id="GO:0004639">
    <property type="term" value="F:phosphoribosylaminoimidazolesuccinocarboxamide synthase activity"/>
    <property type="evidence" value="ECO:0007669"/>
    <property type="project" value="UniProtKB-UniRule"/>
</dbReference>
<dbReference type="GO" id="GO:0006189">
    <property type="term" value="P:'de novo' IMP biosynthetic process"/>
    <property type="evidence" value="ECO:0007669"/>
    <property type="project" value="UniProtKB-UniRule"/>
</dbReference>
<dbReference type="GO" id="GO:0009236">
    <property type="term" value="P:cobalamin biosynthetic process"/>
    <property type="evidence" value="ECO:0007669"/>
    <property type="project" value="InterPro"/>
</dbReference>
<dbReference type="CDD" id="cd01415">
    <property type="entry name" value="SAICAR_synt_PurC"/>
    <property type="match status" value="1"/>
</dbReference>
<dbReference type="FunFam" id="3.30.470.20:FF:000006">
    <property type="entry name" value="Phosphoribosylaminoimidazole-succinocarboxamide synthase"/>
    <property type="match status" value="1"/>
</dbReference>
<dbReference type="Gene3D" id="3.30.470.20">
    <property type="entry name" value="ATP-grasp fold, B domain"/>
    <property type="match status" value="1"/>
</dbReference>
<dbReference type="Gene3D" id="3.30.200.20">
    <property type="entry name" value="Phosphorylase Kinase, domain 1"/>
    <property type="match status" value="1"/>
</dbReference>
<dbReference type="HAMAP" id="MF_00137">
    <property type="entry name" value="SAICAR_synth"/>
    <property type="match status" value="1"/>
</dbReference>
<dbReference type="InterPro" id="IPR028923">
    <property type="entry name" value="SAICAR_synt/ADE2_N"/>
</dbReference>
<dbReference type="InterPro" id="IPR033934">
    <property type="entry name" value="SAICAR_synt_PurC"/>
</dbReference>
<dbReference type="InterPro" id="IPR001636">
    <property type="entry name" value="SAICAR_synth"/>
</dbReference>
<dbReference type="InterPro" id="IPR050089">
    <property type="entry name" value="SAICAR_synthetase"/>
</dbReference>
<dbReference type="InterPro" id="IPR018236">
    <property type="entry name" value="SAICAR_synthetase_CS"/>
</dbReference>
<dbReference type="NCBIfam" id="TIGR00081">
    <property type="entry name" value="purC"/>
    <property type="match status" value="1"/>
</dbReference>
<dbReference type="PANTHER" id="PTHR43599">
    <property type="entry name" value="MULTIFUNCTIONAL PROTEIN ADE2"/>
    <property type="match status" value="1"/>
</dbReference>
<dbReference type="PANTHER" id="PTHR43599:SF3">
    <property type="entry name" value="SI:DKEY-6E2.2"/>
    <property type="match status" value="1"/>
</dbReference>
<dbReference type="Pfam" id="PF01259">
    <property type="entry name" value="SAICAR_synt"/>
    <property type="match status" value="1"/>
</dbReference>
<dbReference type="SUPFAM" id="SSF56104">
    <property type="entry name" value="SAICAR synthase-like"/>
    <property type="match status" value="1"/>
</dbReference>
<dbReference type="PROSITE" id="PS01057">
    <property type="entry name" value="SAICAR_SYNTHETASE_1"/>
    <property type="match status" value="1"/>
</dbReference>
<dbReference type="PROSITE" id="PS01058">
    <property type="entry name" value="SAICAR_SYNTHETASE_2"/>
    <property type="match status" value="1"/>
</dbReference>
<accession>Q24QH2</accession>
<protein>
    <recommendedName>
        <fullName evidence="1">Phosphoribosylaminoimidazole-succinocarboxamide synthase</fullName>
        <ecNumber evidence="1">6.3.2.6</ecNumber>
    </recommendedName>
    <alternativeName>
        <fullName evidence="1">SAICAR synthetase</fullName>
    </alternativeName>
</protein>
<organism>
    <name type="scientific">Desulfitobacterium hafniense (strain Y51)</name>
    <dbReference type="NCBI Taxonomy" id="138119"/>
    <lineage>
        <taxon>Bacteria</taxon>
        <taxon>Bacillati</taxon>
        <taxon>Bacillota</taxon>
        <taxon>Clostridia</taxon>
        <taxon>Eubacteriales</taxon>
        <taxon>Desulfitobacteriaceae</taxon>
        <taxon>Desulfitobacterium</taxon>
    </lineage>
</organism>
<reference key="1">
    <citation type="journal article" date="2006" name="J. Bacteriol.">
        <title>Complete genome sequence of the dehalorespiring bacterium Desulfitobacterium hafniense Y51 and comparison with Dehalococcoides ethenogenes 195.</title>
        <authorList>
            <person name="Nonaka H."/>
            <person name="Keresztes G."/>
            <person name="Shinoda Y."/>
            <person name="Ikenaga Y."/>
            <person name="Abe M."/>
            <person name="Naito K."/>
            <person name="Inatomi K."/>
            <person name="Furukawa K."/>
            <person name="Inui M."/>
            <person name="Yukawa H."/>
        </authorList>
    </citation>
    <scope>NUCLEOTIDE SEQUENCE [LARGE SCALE GENOMIC DNA]</scope>
    <source>
        <strain>Y51</strain>
    </source>
</reference>
<name>PUR7_DESHY</name>
<comment type="catalytic activity">
    <reaction evidence="1">
        <text>5-amino-1-(5-phospho-D-ribosyl)imidazole-4-carboxylate + L-aspartate + ATP = (2S)-2-[5-amino-1-(5-phospho-beta-D-ribosyl)imidazole-4-carboxamido]succinate + ADP + phosphate + 2 H(+)</text>
        <dbReference type="Rhea" id="RHEA:22628"/>
        <dbReference type="ChEBI" id="CHEBI:15378"/>
        <dbReference type="ChEBI" id="CHEBI:29991"/>
        <dbReference type="ChEBI" id="CHEBI:30616"/>
        <dbReference type="ChEBI" id="CHEBI:43474"/>
        <dbReference type="ChEBI" id="CHEBI:58443"/>
        <dbReference type="ChEBI" id="CHEBI:77657"/>
        <dbReference type="ChEBI" id="CHEBI:456216"/>
        <dbReference type="EC" id="6.3.2.6"/>
    </reaction>
</comment>
<comment type="pathway">
    <text evidence="1">Purine metabolism; IMP biosynthesis via de novo pathway; 5-amino-1-(5-phospho-D-ribosyl)imidazole-4-carboxamide from 5-amino-1-(5-phospho-D-ribosyl)imidazole-4-carboxylate: step 1/2.</text>
</comment>
<comment type="similarity">
    <text evidence="1">Belongs to the SAICAR synthetase family.</text>
</comment>
<evidence type="ECO:0000255" key="1">
    <source>
        <dbReference type="HAMAP-Rule" id="MF_00137"/>
    </source>
</evidence>